<proteinExistence type="evidence at protein level"/>
<sequence>MSGGGVIRGPAGNNDCRIYVGNLPPDIRTKDIEDVFYKYGAIRDIDLKNRRGGPPFAFVEFEDPRDAEDAVYGRDGYDYDGYRLRVEFPRSGRGTGRGGGGGGGGGAPRGRYGPPSRRSEYRVIVSGLPPSGSWQDLKDHMREAGDVCYADVFRDGTGVVEFVRKEDMTYAVRKLDNTKFRSHEGETAYIRVKVDGPRSPSYGRSRSRSVVVAEAVVGATAEAAVIPQEEAEDLHATLPATADPDLVHKRSLALIFL</sequence>
<accession>Q5ZML3</accession>
<accession>P84170</accession>
<name>SRSF1_CHICK</name>
<comment type="function">
    <text evidence="2">May play a role in preventing exon skipping, ensuring the accuracy of splicing and regulating alternative splicing.</text>
</comment>
<comment type="subcellular location">
    <subcellularLocation>
        <location evidence="2">Cytoplasm</location>
    </subcellularLocation>
    <subcellularLocation>
        <location evidence="2">Nucleus speckle</location>
    </subcellularLocation>
    <text evidence="2">In nuclear speckles. Shuttles between the nucleus and the cytoplasm.</text>
</comment>
<comment type="mass spectrometry"/>
<comment type="similarity">
    <text evidence="3">Belongs to the splicing factor SR family.</text>
</comment>
<evidence type="ECO:0000250" key="1"/>
<evidence type="ECO:0000250" key="2">
    <source>
        <dbReference type="UniProtKB" id="Q07955"/>
    </source>
</evidence>
<evidence type="ECO:0000255" key="3"/>
<evidence type="ECO:0000255" key="4">
    <source>
        <dbReference type="PROSITE-ProRule" id="PRU00176"/>
    </source>
</evidence>
<evidence type="ECO:0000256" key="5">
    <source>
        <dbReference type="SAM" id="MobiDB-lite"/>
    </source>
</evidence>
<evidence type="ECO:0000269" key="6">
    <source>
    </source>
</evidence>
<evidence type="ECO:0000305" key="7"/>
<evidence type="ECO:0000312" key="8">
    <source>
        <dbReference type="EMBL" id="CAG31030.1"/>
    </source>
</evidence>
<dbReference type="EMBL" id="AJ719371">
    <property type="protein sequence ID" value="CAG31030.1"/>
    <property type="molecule type" value="mRNA"/>
</dbReference>
<dbReference type="RefSeq" id="NP_001107213.1">
    <property type="nucleotide sequence ID" value="NM_001113741.1"/>
</dbReference>
<dbReference type="BMRB" id="Q5ZML3"/>
<dbReference type="SMR" id="Q5ZML3"/>
<dbReference type="FunCoup" id="Q5ZML3">
    <property type="interactions" value="3201"/>
</dbReference>
<dbReference type="STRING" id="9031.ENSGALP00000038262"/>
<dbReference type="PaxDb" id="9031-ENSGALP00000008849"/>
<dbReference type="GeneID" id="772264"/>
<dbReference type="KEGG" id="gga:772264"/>
<dbReference type="CTD" id="6426"/>
<dbReference type="VEuPathDB" id="HostDB:geneid_772264"/>
<dbReference type="eggNOG" id="KOG0105">
    <property type="taxonomic scope" value="Eukaryota"/>
</dbReference>
<dbReference type="InParanoid" id="Q5ZML3"/>
<dbReference type="OrthoDB" id="1099063at2759"/>
<dbReference type="PhylomeDB" id="Q5ZML3"/>
<dbReference type="PRO" id="PR:Q5ZML3"/>
<dbReference type="Proteomes" id="UP000000539">
    <property type="component" value="Unassembled WGS sequence"/>
</dbReference>
<dbReference type="GO" id="GO:0005737">
    <property type="term" value="C:cytoplasm"/>
    <property type="evidence" value="ECO:0007669"/>
    <property type="project" value="UniProtKB-SubCell"/>
</dbReference>
<dbReference type="GO" id="GO:0016607">
    <property type="term" value="C:nuclear speck"/>
    <property type="evidence" value="ECO:0000318"/>
    <property type="project" value="GO_Central"/>
</dbReference>
<dbReference type="GO" id="GO:0003729">
    <property type="term" value="F:mRNA binding"/>
    <property type="evidence" value="ECO:0000318"/>
    <property type="project" value="GO_Central"/>
</dbReference>
<dbReference type="GO" id="GO:0000380">
    <property type="term" value="P:alternative mRNA splicing, via spliceosome"/>
    <property type="evidence" value="ECO:0000318"/>
    <property type="project" value="GO_Central"/>
</dbReference>
<dbReference type="CDD" id="cd12597">
    <property type="entry name" value="RRM1_SRSF1"/>
    <property type="match status" value="1"/>
</dbReference>
<dbReference type="CDD" id="cd12767">
    <property type="entry name" value="RRM2_SRSF1"/>
    <property type="match status" value="1"/>
</dbReference>
<dbReference type="FunFam" id="3.30.70.330:FF:000053">
    <property type="entry name" value="Serine/arginine-rich splicing factor 1"/>
    <property type="match status" value="1"/>
</dbReference>
<dbReference type="FunFam" id="3.30.70.330:FF:000170">
    <property type="entry name" value="Serine/arginine-rich splicing factor 1"/>
    <property type="match status" value="1"/>
</dbReference>
<dbReference type="Gene3D" id="3.30.70.330">
    <property type="match status" value="2"/>
</dbReference>
<dbReference type="InterPro" id="IPR012677">
    <property type="entry name" value="Nucleotide-bd_a/b_plait_sf"/>
</dbReference>
<dbReference type="InterPro" id="IPR035979">
    <property type="entry name" value="RBD_domain_sf"/>
</dbReference>
<dbReference type="InterPro" id="IPR000504">
    <property type="entry name" value="RRM_dom"/>
</dbReference>
<dbReference type="InterPro" id="IPR050374">
    <property type="entry name" value="RRT5_SRSF_SR"/>
</dbReference>
<dbReference type="InterPro" id="IPR034520">
    <property type="entry name" value="SRSF1_RRM1"/>
</dbReference>
<dbReference type="InterPro" id="IPR029538">
    <property type="entry name" value="SRSF1_RRM2"/>
</dbReference>
<dbReference type="PANTHER" id="PTHR23003">
    <property type="entry name" value="RNA RECOGNITION MOTIF RRM DOMAIN CONTAINING PROTEIN"/>
    <property type="match status" value="1"/>
</dbReference>
<dbReference type="PANTHER" id="PTHR23003:SF66">
    <property type="entry name" value="SERINE_ARGININE-RICH SPLICING FACTOR 1"/>
    <property type="match status" value="1"/>
</dbReference>
<dbReference type="Pfam" id="PF00076">
    <property type="entry name" value="RRM_1"/>
    <property type="match status" value="2"/>
</dbReference>
<dbReference type="SMART" id="SM00360">
    <property type="entry name" value="RRM"/>
    <property type="match status" value="2"/>
</dbReference>
<dbReference type="SUPFAM" id="SSF54928">
    <property type="entry name" value="RNA-binding domain, RBD"/>
    <property type="match status" value="1"/>
</dbReference>
<dbReference type="PROSITE" id="PS50102">
    <property type="entry name" value="RRM"/>
    <property type="match status" value="2"/>
</dbReference>
<organism>
    <name type="scientific">Gallus gallus</name>
    <name type="common">Chicken</name>
    <dbReference type="NCBI Taxonomy" id="9031"/>
    <lineage>
        <taxon>Eukaryota</taxon>
        <taxon>Metazoa</taxon>
        <taxon>Chordata</taxon>
        <taxon>Craniata</taxon>
        <taxon>Vertebrata</taxon>
        <taxon>Euteleostomi</taxon>
        <taxon>Archelosauria</taxon>
        <taxon>Archosauria</taxon>
        <taxon>Dinosauria</taxon>
        <taxon>Saurischia</taxon>
        <taxon>Theropoda</taxon>
        <taxon>Coelurosauria</taxon>
        <taxon>Aves</taxon>
        <taxon>Neognathae</taxon>
        <taxon>Galloanserae</taxon>
        <taxon>Galliformes</taxon>
        <taxon>Phasianidae</taxon>
        <taxon>Phasianinae</taxon>
        <taxon>Gallus</taxon>
    </lineage>
</organism>
<reference evidence="7 8" key="1">
    <citation type="journal article" date="2005" name="Genome Biol.">
        <title>Full-length cDNAs from chicken bursal lymphocytes to facilitate gene function analysis.</title>
        <authorList>
            <person name="Caldwell R.B."/>
            <person name="Kierzek A.M."/>
            <person name="Arakawa H."/>
            <person name="Bezzubov Y."/>
            <person name="Zaim J."/>
            <person name="Fiedler P."/>
            <person name="Kutter S."/>
            <person name="Blagodatski A."/>
            <person name="Kostovska D."/>
            <person name="Koter M."/>
            <person name="Plachy J."/>
            <person name="Carninci P."/>
            <person name="Hayashizaki Y."/>
            <person name="Buerstedde J.-M."/>
        </authorList>
    </citation>
    <scope>NUCLEOTIDE SEQUENCE [LARGE SCALE MRNA]</scope>
    <source>
        <strain evidence="8">CB</strain>
        <tissue evidence="8">Bursa of Fabricius</tissue>
    </source>
</reference>
<reference evidence="7" key="2">
    <citation type="journal article" date="2005" name="Proteomics">
        <title>Proteomic analysis of the Gallus gallus embryo at stage-29 of development.</title>
        <authorList>
            <person name="Agudo D."/>
            <person name="Gomez-Esquer F."/>
            <person name="Diaz-Gil G."/>
            <person name="Martinez-Arribas F."/>
            <person name="Delcan J."/>
            <person name="Schneider J."/>
            <person name="Palomar M.A."/>
            <person name="Linares R."/>
        </authorList>
    </citation>
    <scope>IDENTIFICATION</scope>
    <scope>MASS SPECTROMETRY</scope>
    <source>
        <tissue evidence="6">Embryo</tissue>
    </source>
</reference>
<gene>
    <name type="primary">SRSF1</name>
    <name type="synonym">SFRS1</name>
    <name type="ORF">RCJMB04_1l5</name>
</gene>
<protein>
    <recommendedName>
        <fullName>Serine/arginine-rich splicing factor 1</fullName>
    </recommendedName>
    <alternativeName>
        <fullName>Splicing factor, arginine/serine-rich 1</fullName>
    </alternativeName>
</protein>
<keyword id="KW-0007">Acetylation</keyword>
<keyword id="KW-0963">Cytoplasm</keyword>
<keyword id="KW-0507">mRNA processing</keyword>
<keyword id="KW-0508">mRNA splicing</keyword>
<keyword id="KW-0539">Nucleus</keyword>
<keyword id="KW-1185">Reference proteome</keyword>
<keyword id="KW-0677">Repeat</keyword>
<keyword id="KW-0694">RNA-binding</keyword>
<feature type="initiator methionine" description="Removed" evidence="1">
    <location>
        <position position="1"/>
    </location>
</feature>
<feature type="chain" id="PRO_0000223505" description="Serine/arginine-rich splicing factor 1">
    <location>
        <begin position="2"/>
        <end position="257"/>
    </location>
</feature>
<feature type="domain" description="RRM 1" evidence="4">
    <location>
        <begin position="16"/>
        <end position="91"/>
    </location>
</feature>
<feature type="domain" description="RRM 2" evidence="4">
    <location>
        <begin position="121"/>
        <end position="195"/>
    </location>
</feature>
<feature type="region of interest" description="Disordered" evidence="5">
    <location>
        <begin position="88"/>
        <end position="116"/>
    </location>
</feature>
<feature type="compositionally biased region" description="Gly residues" evidence="5">
    <location>
        <begin position="93"/>
        <end position="108"/>
    </location>
</feature>
<feature type="modified residue" description="N-acetylserine" evidence="1">
    <location>
        <position position="2"/>
    </location>
</feature>